<sequence length="619" mass="67674">MSLDIAKYPTLALAENPEELRMLPKESLPKLCDELRQYLLTCVSRSSGHFASGLGVVELTVALHYVYNTPFDHLIWDVGHQAYPHKILTGRRDRISTIRQKDGLHPFPWRGESEYDVLSVGHSSTSISAGLGMAVAAEREGKGRRTVCVIGDGAITAGMAFEAMSHAGDIHSDMLVILNDNGMSISENVGGLNNHLAQLLSGKLYASLREGGKKAFSALPPIKDLLKRTEEHLKGMVVPSTLFEELGFNYIGPVDGHDVHTLTQTLKNMRDLKSPQLLHIMTKKGKGYAPAEKDPIGWHAVPKFDPASGTLPKSQSSLPTYSKIFGEWLCETAAKDSKLMAVTPAMREGSGMVRFSREYPQQYFDVAIAEQHAVTFAAGLAIGGYKPVVAIYSTFLQRAYDQLIHDVAIQNLPVLFAIDRGGLVGADGQTHQGAFDLSFMRCIPNMVIMAPSDENECRQMLYTGYHHNGPAAVRYPRGNGTSAVLEPLEMLPIGKGVLRREGEKIAILCFGTLLAQAQLAAENLNATLVDMRFVKPLDEELVLEMAAKHQVLVTVEENAIMGGAGSGVNELLMAKRRWVPVLNIGLPDLFVPQGEQDEMRSELGLDAAGIQRQIEAWLA</sequence>
<dbReference type="EC" id="2.2.1.7" evidence="1"/>
<dbReference type="EMBL" id="CP000308">
    <property type="protein sequence ID" value="ABG14633.1"/>
    <property type="molecule type" value="Genomic_DNA"/>
</dbReference>
<dbReference type="RefSeq" id="WP_002208662.1">
    <property type="nucleotide sequence ID" value="NZ_CP009906.1"/>
</dbReference>
<dbReference type="SMR" id="Q1C4I9"/>
<dbReference type="GeneID" id="57975536"/>
<dbReference type="KEGG" id="ypa:YPA_2671"/>
<dbReference type="UniPathway" id="UPA00064">
    <property type="reaction ID" value="UER00091"/>
</dbReference>
<dbReference type="Proteomes" id="UP000001971">
    <property type="component" value="Chromosome"/>
</dbReference>
<dbReference type="GO" id="GO:0005829">
    <property type="term" value="C:cytosol"/>
    <property type="evidence" value="ECO:0007669"/>
    <property type="project" value="TreeGrafter"/>
</dbReference>
<dbReference type="GO" id="GO:0008661">
    <property type="term" value="F:1-deoxy-D-xylulose-5-phosphate synthase activity"/>
    <property type="evidence" value="ECO:0007669"/>
    <property type="project" value="UniProtKB-UniRule"/>
</dbReference>
<dbReference type="GO" id="GO:0000287">
    <property type="term" value="F:magnesium ion binding"/>
    <property type="evidence" value="ECO:0007669"/>
    <property type="project" value="UniProtKB-UniRule"/>
</dbReference>
<dbReference type="GO" id="GO:0030976">
    <property type="term" value="F:thiamine pyrophosphate binding"/>
    <property type="evidence" value="ECO:0007669"/>
    <property type="project" value="UniProtKB-UniRule"/>
</dbReference>
<dbReference type="GO" id="GO:0052865">
    <property type="term" value="P:1-deoxy-D-xylulose 5-phosphate biosynthetic process"/>
    <property type="evidence" value="ECO:0007669"/>
    <property type="project" value="UniProtKB-UniPathway"/>
</dbReference>
<dbReference type="GO" id="GO:0019288">
    <property type="term" value="P:isopentenyl diphosphate biosynthetic process, methylerythritol 4-phosphate pathway"/>
    <property type="evidence" value="ECO:0007669"/>
    <property type="project" value="TreeGrafter"/>
</dbReference>
<dbReference type="GO" id="GO:0016114">
    <property type="term" value="P:terpenoid biosynthetic process"/>
    <property type="evidence" value="ECO:0007669"/>
    <property type="project" value="UniProtKB-UniRule"/>
</dbReference>
<dbReference type="GO" id="GO:0009228">
    <property type="term" value="P:thiamine biosynthetic process"/>
    <property type="evidence" value="ECO:0007669"/>
    <property type="project" value="UniProtKB-UniRule"/>
</dbReference>
<dbReference type="CDD" id="cd02007">
    <property type="entry name" value="TPP_DXS"/>
    <property type="match status" value="1"/>
</dbReference>
<dbReference type="CDD" id="cd07033">
    <property type="entry name" value="TPP_PYR_DXS_TK_like"/>
    <property type="match status" value="1"/>
</dbReference>
<dbReference type="FunFam" id="3.40.50.920:FF:000002">
    <property type="entry name" value="1-deoxy-D-xylulose-5-phosphate synthase"/>
    <property type="match status" value="1"/>
</dbReference>
<dbReference type="FunFam" id="3.40.50.970:FF:000005">
    <property type="entry name" value="1-deoxy-D-xylulose-5-phosphate synthase"/>
    <property type="match status" value="1"/>
</dbReference>
<dbReference type="Gene3D" id="3.40.50.920">
    <property type="match status" value="1"/>
</dbReference>
<dbReference type="Gene3D" id="3.40.50.970">
    <property type="match status" value="2"/>
</dbReference>
<dbReference type="HAMAP" id="MF_00315">
    <property type="entry name" value="DXP_synth"/>
    <property type="match status" value="1"/>
</dbReference>
<dbReference type="InterPro" id="IPR005477">
    <property type="entry name" value="Dxylulose-5-P_synthase"/>
</dbReference>
<dbReference type="InterPro" id="IPR029061">
    <property type="entry name" value="THDP-binding"/>
</dbReference>
<dbReference type="InterPro" id="IPR009014">
    <property type="entry name" value="Transketo_C/PFOR_II"/>
</dbReference>
<dbReference type="InterPro" id="IPR005475">
    <property type="entry name" value="Transketolase-like_Pyr-bd"/>
</dbReference>
<dbReference type="InterPro" id="IPR020826">
    <property type="entry name" value="Transketolase_BS"/>
</dbReference>
<dbReference type="InterPro" id="IPR033248">
    <property type="entry name" value="Transketolase_C"/>
</dbReference>
<dbReference type="InterPro" id="IPR049557">
    <property type="entry name" value="Transketolase_CS"/>
</dbReference>
<dbReference type="NCBIfam" id="TIGR00204">
    <property type="entry name" value="dxs"/>
    <property type="match status" value="1"/>
</dbReference>
<dbReference type="NCBIfam" id="NF003933">
    <property type="entry name" value="PRK05444.2-2"/>
    <property type="match status" value="1"/>
</dbReference>
<dbReference type="PANTHER" id="PTHR43322">
    <property type="entry name" value="1-D-DEOXYXYLULOSE 5-PHOSPHATE SYNTHASE-RELATED"/>
    <property type="match status" value="1"/>
</dbReference>
<dbReference type="PANTHER" id="PTHR43322:SF5">
    <property type="entry name" value="1-DEOXY-D-XYLULOSE-5-PHOSPHATE SYNTHASE, CHLOROPLASTIC"/>
    <property type="match status" value="1"/>
</dbReference>
<dbReference type="Pfam" id="PF13292">
    <property type="entry name" value="DXP_synthase_N"/>
    <property type="match status" value="1"/>
</dbReference>
<dbReference type="Pfam" id="PF02779">
    <property type="entry name" value="Transket_pyr"/>
    <property type="match status" value="1"/>
</dbReference>
<dbReference type="Pfam" id="PF02780">
    <property type="entry name" value="Transketolase_C"/>
    <property type="match status" value="1"/>
</dbReference>
<dbReference type="SMART" id="SM00861">
    <property type="entry name" value="Transket_pyr"/>
    <property type="match status" value="1"/>
</dbReference>
<dbReference type="SUPFAM" id="SSF52518">
    <property type="entry name" value="Thiamin diphosphate-binding fold (THDP-binding)"/>
    <property type="match status" value="2"/>
</dbReference>
<dbReference type="SUPFAM" id="SSF52922">
    <property type="entry name" value="TK C-terminal domain-like"/>
    <property type="match status" value="1"/>
</dbReference>
<dbReference type="PROSITE" id="PS00801">
    <property type="entry name" value="TRANSKETOLASE_1"/>
    <property type="match status" value="1"/>
</dbReference>
<dbReference type="PROSITE" id="PS00802">
    <property type="entry name" value="TRANSKETOLASE_2"/>
    <property type="match status" value="1"/>
</dbReference>
<reference key="1">
    <citation type="journal article" date="2006" name="J. Bacteriol.">
        <title>Complete genome sequence of Yersinia pestis strains Antiqua and Nepal516: evidence of gene reduction in an emerging pathogen.</title>
        <authorList>
            <person name="Chain P.S.G."/>
            <person name="Hu P."/>
            <person name="Malfatti S.A."/>
            <person name="Radnedge L."/>
            <person name="Larimer F."/>
            <person name="Vergez L.M."/>
            <person name="Worsham P."/>
            <person name="Chu M.C."/>
            <person name="Andersen G.L."/>
        </authorList>
    </citation>
    <scope>NUCLEOTIDE SEQUENCE [LARGE SCALE GENOMIC DNA]</scope>
    <source>
        <strain>Antiqua</strain>
    </source>
</reference>
<keyword id="KW-0414">Isoprene biosynthesis</keyword>
<keyword id="KW-0460">Magnesium</keyword>
<keyword id="KW-0479">Metal-binding</keyword>
<keyword id="KW-0784">Thiamine biosynthesis</keyword>
<keyword id="KW-0786">Thiamine pyrophosphate</keyword>
<keyword id="KW-0808">Transferase</keyword>
<gene>
    <name evidence="1" type="primary">dxs</name>
    <name type="ordered locus">YPA_2671</name>
</gene>
<protein>
    <recommendedName>
        <fullName evidence="1">1-deoxy-D-xylulose-5-phosphate synthase</fullName>
        <ecNumber evidence="1">2.2.1.7</ecNumber>
    </recommendedName>
    <alternativeName>
        <fullName evidence="1">1-deoxyxylulose-5-phosphate synthase</fullName>
        <shortName evidence="1">DXP synthase</shortName>
        <shortName evidence="1">DXPS</shortName>
    </alternativeName>
</protein>
<evidence type="ECO:0000255" key="1">
    <source>
        <dbReference type="HAMAP-Rule" id="MF_00315"/>
    </source>
</evidence>
<comment type="function">
    <text evidence="1">Catalyzes the acyloin condensation reaction between C atoms 2 and 3 of pyruvate and glyceraldehyde 3-phosphate to yield 1-deoxy-D-xylulose-5-phosphate (DXP).</text>
</comment>
<comment type="catalytic activity">
    <reaction evidence="1">
        <text>D-glyceraldehyde 3-phosphate + pyruvate + H(+) = 1-deoxy-D-xylulose 5-phosphate + CO2</text>
        <dbReference type="Rhea" id="RHEA:12605"/>
        <dbReference type="ChEBI" id="CHEBI:15361"/>
        <dbReference type="ChEBI" id="CHEBI:15378"/>
        <dbReference type="ChEBI" id="CHEBI:16526"/>
        <dbReference type="ChEBI" id="CHEBI:57792"/>
        <dbReference type="ChEBI" id="CHEBI:59776"/>
        <dbReference type="EC" id="2.2.1.7"/>
    </reaction>
</comment>
<comment type="cofactor">
    <cofactor evidence="1">
        <name>Mg(2+)</name>
        <dbReference type="ChEBI" id="CHEBI:18420"/>
    </cofactor>
    <text evidence="1">Binds 1 Mg(2+) ion per subunit.</text>
</comment>
<comment type="cofactor">
    <cofactor evidence="1">
        <name>thiamine diphosphate</name>
        <dbReference type="ChEBI" id="CHEBI:58937"/>
    </cofactor>
    <text evidence="1">Binds 1 thiamine pyrophosphate per subunit.</text>
</comment>
<comment type="pathway">
    <text evidence="1">Metabolic intermediate biosynthesis; 1-deoxy-D-xylulose 5-phosphate biosynthesis; 1-deoxy-D-xylulose 5-phosphate from D-glyceraldehyde 3-phosphate and pyruvate: step 1/1.</text>
</comment>
<comment type="subunit">
    <text evidence="1">Homodimer.</text>
</comment>
<comment type="similarity">
    <text evidence="1">Belongs to the transketolase family. DXPS subfamily.</text>
</comment>
<name>DXS_YERPA</name>
<organism>
    <name type="scientific">Yersinia pestis bv. Antiqua (strain Antiqua)</name>
    <dbReference type="NCBI Taxonomy" id="360102"/>
    <lineage>
        <taxon>Bacteria</taxon>
        <taxon>Pseudomonadati</taxon>
        <taxon>Pseudomonadota</taxon>
        <taxon>Gammaproteobacteria</taxon>
        <taxon>Enterobacterales</taxon>
        <taxon>Yersiniaceae</taxon>
        <taxon>Yersinia</taxon>
    </lineage>
</organism>
<proteinExistence type="inferred from homology"/>
<accession>Q1C4I9</accession>
<feature type="chain" id="PRO_0000256507" description="1-deoxy-D-xylulose-5-phosphate synthase">
    <location>
        <begin position="1"/>
        <end position="619"/>
    </location>
</feature>
<feature type="binding site" evidence="1">
    <location>
        <position position="80"/>
    </location>
    <ligand>
        <name>thiamine diphosphate</name>
        <dbReference type="ChEBI" id="CHEBI:58937"/>
    </ligand>
</feature>
<feature type="binding site" evidence="1">
    <location>
        <begin position="121"/>
        <end position="123"/>
    </location>
    <ligand>
        <name>thiamine diphosphate</name>
        <dbReference type="ChEBI" id="CHEBI:58937"/>
    </ligand>
</feature>
<feature type="binding site" evidence="1">
    <location>
        <position position="152"/>
    </location>
    <ligand>
        <name>Mg(2+)</name>
        <dbReference type="ChEBI" id="CHEBI:18420"/>
    </ligand>
</feature>
<feature type="binding site" evidence="1">
    <location>
        <begin position="153"/>
        <end position="154"/>
    </location>
    <ligand>
        <name>thiamine diphosphate</name>
        <dbReference type="ChEBI" id="CHEBI:58937"/>
    </ligand>
</feature>
<feature type="binding site" evidence="1">
    <location>
        <position position="181"/>
    </location>
    <ligand>
        <name>Mg(2+)</name>
        <dbReference type="ChEBI" id="CHEBI:18420"/>
    </ligand>
</feature>
<feature type="binding site" evidence="1">
    <location>
        <position position="181"/>
    </location>
    <ligand>
        <name>thiamine diphosphate</name>
        <dbReference type="ChEBI" id="CHEBI:58937"/>
    </ligand>
</feature>
<feature type="binding site" evidence="1">
    <location>
        <position position="288"/>
    </location>
    <ligand>
        <name>thiamine diphosphate</name>
        <dbReference type="ChEBI" id="CHEBI:58937"/>
    </ligand>
</feature>
<feature type="binding site" evidence="1">
    <location>
        <position position="370"/>
    </location>
    <ligand>
        <name>thiamine diphosphate</name>
        <dbReference type="ChEBI" id="CHEBI:58937"/>
    </ligand>
</feature>